<evidence type="ECO:0000256" key="1">
    <source>
        <dbReference type="SAM" id="MobiDB-lite"/>
    </source>
</evidence>
<evidence type="ECO:0000305" key="2"/>
<dbReference type="EMBL" id="Y08501">
    <property type="protein sequence ID" value="CAA69783.1"/>
    <property type="molecule type" value="Genomic_DNA"/>
</dbReference>
<dbReference type="EMBL" id="BK010421">
    <property type="status" value="NOT_ANNOTATED_CDS"/>
    <property type="molecule type" value="Genomic_DNA"/>
</dbReference>
<dbReference type="EMBL" id="AC007730">
    <property type="status" value="NOT_ANNOTATED_CDS"/>
    <property type="molecule type" value="Genomic_DNA"/>
</dbReference>
<dbReference type="RefSeq" id="NP_085585.1">
    <property type="nucleotide sequence ID" value="NC_001284.2"/>
</dbReference>
<dbReference type="STRING" id="3702.P92563"/>
<dbReference type="PaxDb" id="3702-ATMG01330.1"/>
<dbReference type="EnsemblPlants" id="ATMG01330.1">
    <property type="protein sequence ID" value="ATMG01330.1"/>
    <property type="gene ID" value="ATMG01330"/>
</dbReference>
<dbReference type="Gramene" id="ATMG01330.1">
    <property type="protein sequence ID" value="ATMG01330.1"/>
    <property type="gene ID" value="ATMG01330"/>
</dbReference>
<dbReference type="Araport" id="ATMG01330"/>
<dbReference type="TAIR" id="ATMG01330">
    <property type="gene designation" value="ORF107H"/>
</dbReference>
<dbReference type="eggNOG" id="ENOG502SWZT">
    <property type="taxonomic scope" value="Eukaryota"/>
</dbReference>
<dbReference type="HOGENOM" id="CLU_1973559_0_0_1"/>
<dbReference type="InParanoid" id="P92563"/>
<dbReference type="PRO" id="PR:P92563"/>
<dbReference type="Proteomes" id="UP000006548">
    <property type="component" value="Mitochondrion MT"/>
</dbReference>
<dbReference type="ExpressionAtlas" id="P92563">
    <property type="expression patterns" value="baseline and differential"/>
</dbReference>
<dbReference type="GO" id="GO:0005739">
    <property type="term" value="C:mitochondrion"/>
    <property type="evidence" value="ECO:0007669"/>
    <property type="project" value="UniProtKB-SubCell"/>
</dbReference>
<accession>P92563</accession>
<accession>Q1ZXV5</accession>
<geneLocation type="mitochondrion"/>
<feature type="chain" id="PRO_0000196827" description="Uncharacterized mitochondrial protein AtMg01330">
    <location>
        <begin position="1"/>
        <end position="127"/>
    </location>
</feature>
<feature type="region of interest" description="Disordered" evidence="1">
    <location>
        <begin position="1"/>
        <end position="22"/>
    </location>
</feature>
<feature type="region of interest" description="Disordered" evidence="1">
    <location>
        <begin position="53"/>
        <end position="106"/>
    </location>
</feature>
<feature type="compositionally biased region" description="Basic and acidic residues" evidence="1">
    <location>
        <begin position="76"/>
        <end position="95"/>
    </location>
</feature>
<feature type="sequence conflict" description="In Ref. 3; AC007730." evidence="2" ref="3">
    <original>G</original>
    <variation>R</variation>
    <location>
        <position position="14"/>
    </location>
</feature>
<proteinExistence type="predicted"/>
<name>M1330_ARATH</name>
<keyword id="KW-0496">Mitochondrion</keyword>
<keyword id="KW-1185">Reference proteome</keyword>
<comment type="subcellular location">
    <subcellularLocation>
        <location evidence="2">Mitochondrion</location>
    </subcellularLocation>
</comment>
<comment type="miscellaneous">
    <text>A stretch of 270 kb of the mitochondrial genome is duplicated within the centromere of chromosome 2 resulting in the duplication of the gene. The expression of the duplicated gene is not demonstrated.</text>
</comment>
<comment type="sequence caution" evidence="2">
    <conflict type="frameshift">
        <sequence resource="EMBL" id="AC007730"/>
    </conflict>
</comment>
<gene>
    <name type="ordered locus">AtMg01330</name>
</gene>
<sequence>MLPAGCWNDTSRDGPGFRKMKGPKVEIGGYKFPISLGAENESTSRCDTAFSFLVGKERRSPSEPNRPMKNKRRAKPNGEAHAEQARRKISVEEKQPSSFPSHPGPKAVQSFLAKSRIWGFLLRYLTI</sequence>
<organism>
    <name type="scientific">Arabidopsis thaliana</name>
    <name type="common">Mouse-ear cress</name>
    <dbReference type="NCBI Taxonomy" id="3702"/>
    <lineage>
        <taxon>Eukaryota</taxon>
        <taxon>Viridiplantae</taxon>
        <taxon>Streptophyta</taxon>
        <taxon>Embryophyta</taxon>
        <taxon>Tracheophyta</taxon>
        <taxon>Spermatophyta</taxon>
        <taxon>Magnoliopsida</taxon>
        <taxon>eudicotyledons</taxon>
        <taxon>Gunneridae</taxon>
        <taxon>Pentapetalae</taxon>
        <taxon>rosids</taxon>
        <taxon>malvids</taxon>
        <taxon>Brassicales</taxon>
        <taxon>Brassicaceae</taxon>
        <taxon>Camelineae</taxon>
        <taxon>Arabidopsis</taxon>
    </lineage>
</organism>
<protein>
    <recommendedName>
        <fullName>Uncharacterized mitochondrial protein AtMg01330</fullName>
    </recommendedName>
    <alternativeName>
        <fullName>ORF107h</fullName>
    </alternativeName>
</protein>
<reference key="1">
    <citation type="journal article" date="1997" name="Nat. Genet.">
        <title>The mitochondrial genome of Arabidopsis thaliana contains 57 genes in 366,924 nucleotides.</title>
        <authorList>
            <person name="Unseld M."/>
            <person name="Marienfeld J.R."/>
            <person name="Brandt P."/>
            <person name="Brennicke A."/>
        </authorList>
    </citation>
    <scope>NUCLEOTIDE SEQUENCE [LARGE SCALE GENOMIC DNA]</scope>
    <source>
        <strain>cv. C24</strain>
    </source>
</reference>
<reference key="2">
    <citation type="journal article" date="2018" name="Plant Cell">
        <title>Correction of persistent errors in Arabidopsis reference mitochondrial genomes.</title>
        <authorList>
            <person name="Sloan D.B."/>
            <person name="Wu Z."/>
            <person name="Sharbrough J."/>
        </authorList>
    </citation>
    <scope>NUCLEOTIDE SEQUENCE [LARGE SCALE GENOMIC DNA]</scope>
    <source>
        <strain>cv. Columbia</strain>
    </source>
</reference>
<reference key="3">
    <citation type="journal article" date="1999" name="Nature">
        <title>Sequence and analysis of chromosome 2 of the plant Arabidopsis thaliana.</title>
        <authorList>
            <person name="Lin X."/>
            <person name="Kaul S."/>
            <person name="Rounsley S.D."/>
            <person name="Shea T.P."/>
            <person name="Benito M.-I."/>
            <person name="Town C.D."/>
            <person name="Fujii C.Y."/>
            <person name="Mason T.M."/>
            <person name="Bowman C.L."/>
            <person name="Barnstead M.E."/>
            <person name="Feldblyum T.V."/>
            <person name="Buell C.R."/>
            <person name="Ketchum K.A."/>
            <person name="Lee J.J."/>
            <person name="Ronning C.M."/>
            <person name="Koo H.L."/>
            <person name="Moffat K.S."/>
            <person name="Cronin L.A."/>
            <person name="Shen M."/>
            <person name="Pai G."/>
            <person name="Van Aken S."/>
            <person name="Umayam L."/>
            <person name="Tallon L.J."/>
            <person name="Gill J.E."/>
            <person name="Adams M.D."/>
            <person name="Carrera A.J."/>
            <person name="Creasy T.H."/>
            <person name="Goodman H.M."/>
            <person name="Somerville C.R."/>
            <person name="Copenhaver G.P."/>
            <person name="Preuss D."/>
            <person name="Nierman W.C."/>
            <person name="White O."/>
            <person name="Eisen J.A."/>
            <person name="Salzberg S.L."/>
            <person name="Fraser C.M."/>
            <person name="Venter J.C."/>
        </authorList>
    </citation>
    <scope>NUCLEOTIDE SEQUENCE [LARGE SCALE GENOMIC DNA]</scope>
    <source>
        <strain>cv. Columbia</strain>
    </source>
</reference>